<dbReference type="EMBL" id="CP001111">
    <property type="protein sequence ID" value="ACF52827.1"/>
    <property type="molecule type" value="Genomic_DNA"/>
</dbReference>
<dbReference type="RefSeq" id="WP_012511899.1">
    <property type="nucleotide sequence ID" value="NC_011071.1"/>
</dbReference>
<dbReference type="SMR" id="B4ST36"/>
<dbReference type="STRING" id="391008.Smal_3128"/>
<dbReference type="KEGG" id="smt:Smal_3128"/>
<dbReference type="eggNOG" id="COG0217">
    <property type="taxonomic scope" value="Bacteria"/>
</dbReference>
<dbReference type="HOGENOM" id="CLU_062974_2_2_6"/>
<dbReference type="OrthoDB" id="9781053at2"/>
<dbReference type="Proteomes" id="UP000001867">
    <property type="component" value="Chromosome"/>
</dbReference>
<dbReference type="GO" id="GO:0005829">
    <property type="term" value="C:cytosol"/>
    <property type="evidence" value="ECO:0007669"/>
    <property type="project" value="TreeGrafter"/>
</dbReference>
<dbReference type="GO" id="GO:0003677">
    <property type="term" value="F:DNA binding"/>
    <property type="evidence" value="ECO:0007669"/>
    <property type="project" value="UniProtKB-UniRule"/>
</dbReference>
<dbReference type="GO" id="GO:0006355">
    <property type="term" value="P:regulation of DNA-templated transcription"/>
    <property type="evidence" value="ECO:0007669"/>
    <property type="project" value="UniProtKB-UniRule"/>
</dbReference>
<dbReference type="FunFam" id="1.10.10.200:FF:000007">
    <property type="entry name" value="Probable transcriptional regulatory protein AC801_15750"/>
    <property type="match status" value="1"/>
</dbReference>
<dbReference type="Gene3D" id="1.10.10.200">
    <property type="match status" value="1"/>
</dbReference>
<dbReference type="Gene3D" id="3.30.70.980">
    <property type="match status" value="2"/>
</dbReference>
<dbReference type="HAMAP" id="MF_00693">
    <property type="entry name" value="Transcrip_reg_TACO1"/>
    <property type="match status" value="1"/>
</dbReference>
<dbReference type="InterPro" id="IPR017856">
    <property type="entry name" value="Integrase-like_N"/>
</dbReference>
<dbReference type="InterPro" id="IPR048300">
    <property type="entry name" value="TACO1_YebC-like_2nd/3rd_dom"/>
</dbReference>
<dbReference type="InterPro" id="IPR049083">
    <property type="entry name" value="TACO1_YebC_N"/>
</dbReference>
<dbReference type="InterPro" id="IPR002876">
    <property type="entry name" value="Transcrip_reg_TACO1-like"/>
</dbReference>
<dbReference type="InterPro" id="IPR026564">
    <property type="entry name" value="Transcrip_reg_TACO1-like_dom3"/>
</dbReference>
<dbReference type="InterPro" id="IPR029072">
    <property type="entry name" value="YebC-like"/>
</dbReference>
<dbReference type="NCBIfam" id="NF001030">
    <property type="entry name" value="PRK00110.1"/>
    <property type="match status" value="1"/>
</dbReference>
<dbReference type="NCBIfam" id="NF009044">
    <property type="entry name" value="PRK12378.1"/>
    <property type="match status" value="1"/>
</dbReference>
<dbReference type="NCBIfam" id="TIGR01033">
    <property type="entry name" value="YebC/PmpR family DNA-binding transcriptional regulator"/>
    <property type="match status" value="1"/>
</dbReference>
<dbReference type="PANTHER" id="PTHR12532:SF6">
    <property type="entry name" value="TRANSCRIPTIONAL REGULATORY PROTEIN YEBC-RELATED"/>
    <property type="match status" value="1"/>
</dbReference>
<dbReference type="PANTHER" id="PTHR12532">
    <property type="entry name" value="TRANSLATIONAL ACTIVATOR OF CYTOCHROME C OXIDASE 1"/>
    <property type="match status" value="1"/>
</dbReference>
<dbReference type="Pfam" id="PF20772">
    <property type="entry name" value="TACO1_YebC_N"/>
    <property type="match status" value="1"/>
</dbReference>
<dbReference type="Pfam" id="PF01709">
    <property type="entry name" value="Transcrip_reg"/>
    <property type="match status" value="1"/>
</dbReference>
<dbReference type="SUPFAM" id="SSF75625">
    <property type="entry name" value="YebC-like"/>
    <property type="match status" value="1"/>
</dbReference>
<sequence>MGRGPSIENRKNASDAKRGKIFTKIIREIGVAARGGGGDPNNNPRLRVAMDKGLTANMSKDVIERAIKKATGELEGVEYEEIRYEGYAPGGVAVIVDCLTDNRVRTVADVRHAFSKCGGNMGTEGSVSFMFKRVGVLHFAAGADEDAISEAAIEAGADDIVVYPEDGAIDVLTAADSYHAVKEAMAAAGRTPDHAELTFRADNDIKVEGDTVLQVKKLLDMLEDLDDVQDVYSNADLGADAYA</sequence>
<comment type="subcellular location">
    <subcellularLocation>
        <location evidence="1">Cytoplasm</location>
    </subcellularLocation>
</comment>
<comment type="similarity">
    <text evidence="1">Belongs to the TACO1 family.</text>
</comment>
<proteinExistence type="inferred from homology"/>
<reference key="1">
    <citation type="submission" date="2008-06" db="EMBL/GenBank/DDBJ databases">
        <title>Complete sequence of Stenotrophomonas maltophilia R551-3.</title>
        <authorList>
            <consortium name="US DOE Joint Genome Institute"/>
            <person name="Lucas S."/>
            <person name="Copeland A."/>
            <person name="Lapidus A."/>
            <person name="Glavina del Rio T."/>
            <person name="Dalin E."/>
            <person name="Tice H."/>
            <person name="Pitluck S."/>
            <person name="Chain P."/>
            <person name="Malfatti S."/>
            <person name="Shin M."/>
            <person name="Vergez L."/>
            <person name="Lang D."/>
            <person name="Schmutz J."/>
            <person name="Larimer F."/>
            <person name="Land M."/>
            <person name="Hauser L."/>
            <person name="Kyrpides N."/>
            <person name="Mikhailova N."/>
            <person name="Taghavi S."/>
            <person name="Monchy S."/>
            <person name="Newman L."/>
            <person name="Vangronsveld J."/>
            <person name="van der Lelie D."/>
            <person name="Richardson P."/>
        </authorList>
    </citation>
    <scope>NUCLEOTIDE SEQUENCE [LARGE SCALE GENOMIC DNA]</scope>
    <source>
        <strain>R551-3</strain>
    </source>
</reference>
<feature type="chain" id="PRO_1000132238" description="Probable transcriptional regulatory protein Smal_3128">
    <location>
        <begin position="1"/>
        <end position="243"/>
    </location>
</feature>
<accession>B4ST36</accession>
<gene>
    <name type="ordered locus">Smal_3128</name>
</gene>
<name>Y3128_STRM5</name>
<evidence type="ECO:0000255" key="1">
    <source>
        <dbReference type="HAMAP-Rule" id="MF_00693"/>
    </source>
</evidence>
<protein>
    <recommendedName>
        <fullName evidence="1">Probable transcriptional regulatory protein Smal_3128</fullName>
    </recommendedName>
</protein>
<organism>
    <name type="scientific">Stenotrophomonas maltophilia (strain R551-3)</name>
    <dbReference type="NCBI Taxonomy" id="391008"/>
    <lineage>
        <taxon>Bacteria</taxon>
        <taxon>Pseudomonadati</taxon>
        <taxon>Pseudomonadota</taxon>
        <taxon>Gammaproteobacteria</taxon>
        <taxon>Lysobacterales</taxon>
        <taxon>Lysobacteraceae</taxon>
        <taxon>Stenotrophomonas</taxon>
        <taxon>Stenotrophomonas maltophilia group</taxon>
    </lineage>
</organism>
<keyword id="KW-0963">Cytoplasm</keyword>
<keyword id="KW-0238">DNA-binding</keyword>
<keyword id="KW-0804">Transcription</keyword>
<keyword id="KW-0805">Transcription regulation</keyword>